<comment type="function">
    <text evidence="2 3">Acts as a cell end marker required for efficient new end take-off (NETO), whereby growth is activated at the cell end to generate bipolarity in extending cells. Also required for proper placement of the septum.</text>
</comment>
<comment type="interaction">
    <interactant intactId="EBI-875326">
        <id>O14248</id>
    </interactant>
    <interactant intactId="EBI-875310">
        <id>O59740</id>
        <label>mod5</label>
    </interactant>
    <organismsDiffer>false</organismsDiffer>
    <experiments>3</experiments>
</comment>
<comment type="interaction">
    <interactant intactId="EBI-875326">
        <id>O14248</id>
    </interactant>
    <interactant intactId="EBI-875376">
        <id>P87061</id>
        <label>tea1</label>
    </interactant>
    <organismsDiffer>false</organismsDiffer>
    <experiments>2</experiments>
</comment>
<comment type="subcellular location">
    <subcellularLocation>
        <location evidence="2">Cell tip</location>
    </subcellularLocation>
    <text evidence="2">Present at both poles of the cell throughout the cell cycle whether they are growing or not. Located at the division site at time of cytokinesis.</text>
</comment>
<gene>
    <name type="primary">tea3</name>
    <name type="ORF">SPAC6G10.02c</name>
</gene>
<sequence length="1125" mass="127755">MVQKVLSRQSDNSQDVSAEQLDVVESGSIDQQNIRAWVVRKVKENDKRTSTNQSFKWEAVKPASCLDAANEKFMYLHGGREKSGISNSLFKLDLDSCTVYSHNRGEDNDSPARVGHSIVCSADTIYLFGGCDSETDSTFEVGDNSLYAYNFKSNQWNLVSTQSPLPSPRTGHSMLLVDSKLWIFGGECQGKYLNDIHLFDTKGVDRRTQSELKQKANANNVEKANMEFDETDWSWETPFLHSSSPPPRSNHSVTLVQGKIFVHGGHNDTGPLSDLWLFDLETLSWTEVRSIGRFPGPREGHQATTIDDTVYIYGGRDNKGLILNELWAFNYSQQRWSLVSNPIPILLSDSSSYKIVSKNNHILLLYLNALDAPKQLLCYEADPKNLYWDKDKFSDIPVLQHISMKPSNASNHTVSLGYLNDRPNHSKKNSVTSTSSSQFNNFLEQNQKAVRSARHRHYASLDEQGLHSLRNLSKTSGMNHSADFSLHEFGQADPFAYEIEKPIASLPLPNGNDTISRSSESSSPINESESNSLLKLQSDFKFSNSDDRVAWLEEQLLYCMQQGYTLKPPNLFQHVDEKLRLEKKEQLSYLEILKVIEQMLESNEQKFKKQIVSLASENAKLAAQRDAAVENANYSRSLIQKKTTDETVGSLIEKVGKLEYEVQGTLEEATSYYQKNTELQQLLKQNESASELLKSRNEKLCVDYDKLRSVFEEDSSKILSLQKENENLQSQILQISEELVDYRSRCEALEYGNYELETKLIEMHDRVEMQTNVIEASASALDVSNTAILSFEDSLRRERDEKSTLQQKCLNLQYEYENVRIELENLQSRALELESALEQSVSDAKYSKAIMQSGLSKLLSSINENKDNLKEFSKSKQKISYLESQLEGLHELLRESQRLCEGRTKELLNSQQKLYDLKHSYSSVMTEKSKLSDQVNDLTEQAKITQRKLSEVQIALADSKMNQQLSGKDSTDVHLPTDFSASSSPLRSYFNEEDSFNNASAAHSSKESDIPSGGVFTKYRNHFGNLMTSEETKAPDNNDLHKRLSDVINSQQKFLSLSPQVSKDYYDVRSKLNDTAGSFSGEEMRAIDDNYYASRIKQLEDDYQKAITYANCSDESFQQLSHSFM</sequence>
<reference key="1">
    <citation type="journal article" date="2002" name="Nature">
        <title>The genome sequence of Schizosaccharomyces pombe.</title>
        <authorList>
            <person name="Wood V."/>
            <person name="Gwilliam R."/>
            <person name="Rajandream M.A."/>
            <person name="Lyne M.H."/>
            <person name="Lyne R."/>
            <person name="Stewart A."/>
            <person name="Sgouros J.G."/>
            <person name="Peat N."/>
            <person name="Hayles J."/>
            <person name="Baker S.G."/>
            <person name="Basham D."/>
            <person name="Bowman S."/>
            <person name="Brooks K."/>
            <person name="Brown D."/>
            <person name="Brown S."/>
            <person name="Chillingworth T."/>
            <person name="Churcher C.M."/>
            <person name="Collins M."/>
            <person name="Connor R."/>
            <person name="Cronin A."/>
            <person name="Davis P."/>
            <person name="Feltwell T."/>
            <person name="Fraser A."/>
            <person name="Gentles S."/>
            <person name="Goble A."/>
            <person name="Hamlin N."/>
            <person name="Harris D.E."/>
            <person name="Hidalgo J."/>
            <person name="Hodgson G."/>
            <person name="Holroyd S."/>
            <person name="Hornsby T."/>
            <person name="Howarth S."/>
            <person name="Huckle E.J."/>
            <person name="Hunt S."/>
            <person name="Jagels K."/>
            <person name="James K.D."/>
            <person name="Jones L."/>
            <person name="Jones M."/>
            <person name="Leather S."/>
            <person name="McDonald S."/>
            <person name="McLean J."/>
            <person name="Mooney P."/>
            <person name="Moule S."/>
            <person name="Mungall K.L."/>
            <person name="Murphy L.D."/>
            <person name="Niblett D."/>
            <person name="Odell C."/>
            <person name="Oliver K."/>
            <person name="O'Neil S."/>
            <person name="Pearson D."/>
            <person name="Quail M.A."/>
            <person name="Rabbinowitsch E."/>
            <person name="Rutherford K.M."/>
            <person name="Rutter S."/>
            <person name="Saunders D."/>
            <person name="Seeger K."/>
            <person name="Sharp S."/>
            <person name="Skelton J."/>
            <person name="Simmonds M.N."/>
            <person name="Squares R."/>
            <person name="Squares S."/>
            <person name="Stevens K."/>
            <person name="Taylor K."/>
            <person name="Taylor R.G."/>
            <person name="Tivey A."/>
            <person name="Walsh S.V."/>
            <person name="Warren T."/>
            <person name="Whitehead S."/>
            <person name="Woodward J.R."/>
            <person name="Volckaert G."/>
            <person name="Aert R."/>
            <person name="Robben J."/>
            <person name="Grymonprez B."/>
            <person name="Weltjens I."/>
            <person name="Vanstreels E."/>
            <person name="Rieger M."/>
            <person name="Schaefer M."/>
            <person name="Mueller-Auer S."/>
            <person name="Gabel C."/>
            <person name="Fuchs M."/>
            <person name="Duesterhoeft A."/>
            <person name="Fritzc C."/>
            <person name="Holzer E."/>
            <person name="Moestl D."/>
            <person name="Hilbert H."/>
            <person name="Borzym K."/>
            <person name="Langer I."/>
            <person name="Beck A."/>
            <person name="Lehrach H."/>
            <person name="Reinhardt R."/>
            <person name="Pohl T.M."/>
            <person name="Eger P."/>
            <person name="Zimmermann W."/>
            <person name="Wedler H."/>
            <person name="Wambutt R."/>
            <person name="Purnelle B."/>
            <person name="Goffeau A."/>
            <person name="Cadieu E."/>
            <person name="Dreano S."/>
            <person name="Gloux S."/>
            <person name="Lelaure V."/>
            <person name="Mottier S."/>
            <person name="Galibert F."/>
            <person name="Aves S.J."/>
            <person name="Xiang Z."/>
            <person name="Hunt C."/>
            <person name="Moore K."/>
            <person name="Hurst S.M."/>
            <person name="Lucas M."/>
            <person name="Rochet M."/>
            <person name="Gaillardin C."/>
            <person name="Tallada V.A."/>
            <person name="Garzon A."/>
            <person name="Thode G."/>
            <person name="Daga R.R."/>
            <person name="Cruzado L."/>
            <person name="Jimenez J."/>
            <person name="Sanchez M."/>
            <person name="del Rey F."/>
            <person name="Benito J."/>
            <person name="Dominguez A."/>
            <person name="Revuelta J.L."/>
            <person name="Moreno S."/>
            <person name="Armstrong J."/>
            <person name="Forsburg S.L."/>
            <person name="Cerutti L."/>
            <person name="Lowe T."/>
            <person name="McCombie W.R."/>
            <person name="Paulsen I."/>
            <person name="Potashkin J."/>
            <person name="Shpakovski G.V."/>
            <person name="Ussery D."/>
            <person name="Barrell B.G."/>
            <person name="Nurse P."/>
        </authorList>
    </citation>
    <scope>NUCLEOTIDE SEQUENCE [LARGE SCALE GENOMIC DNA]</scope>
    <source>
        <strain>972 / ATCC 24843</strain>
    </source>
</reference>
<reference key="2">
    <citation type="journal article" date="2002" name="Curr. Biol.">
        <title>Tea3p is a cell end marker activating polarized growth in Schizosaccharomyces pombe.</title>
        <authorList>
            <person name="Arellano M."/>
            <person name="Niccoli T."/>
            <person name="Nurse P."/>
        </authorList>
    </citation>
    <scope>FUNCTION</scope>
    <scope>SUBCELLULAR LOCATION</scope>
</reference>
<reference key="3">
    <citation type="journal article" date="2003" name="Yeast">
        <title>Role of Tea1p, Tea3p and Pom1p in the determination of cell ends in Schizosaccharomyces pombe.</title>
        <authorList>
            <person name="Niccoli T."/>
            <person name="Arellano M."/>
            <person name="Nurse P."/>
        </authorList>
    </citation>
    <scope>FUNCTION</scope>
</reference>
<reference key="4">
    <citation type="journal article" date="2008" name="J. Proteome Res.">
        <title>Phosphoproteome analysis of fission yeast.</title>
        <authorList>
            <person name="Wilson-Grady J.T."/>
            <person name="Villen J."/>
            <person name="Gygi S.P."/>
        </authorList>
    </citation>
    <scope>PHOSPHORYLATION [LARGE SCALE ANALYSIS] AT SER-430; SER-437; SER-460; SER-523; SER-980; SER-982; SER-983; SER-984; SER-1078 AND SER-1080</scope>
    <scope>IDENTIFICATION BY MASS SPECTROMETRY</scope>
</reference>
<protein>
    <recommendedName>
        <fullName>Tip elongation aberrant protein 3</fullName>
    </recommendedName>
    <alternativeName>
        <fullName>Cell polarity protein tea3</fullName>
    </alternativeName>
</protein>
<feature type="chain" id="PRO_0000119149" description="Tip elongation aberrant protein 3">
    <location>
        <begin position="1"/>
        <end position="1125"/>
    </location>
</feature>
<feature type="repeat" description="Kelch 1">
    <location>
        <begin position="73"/>
        <end position="123"/>
    </location>
</feature>
<feature type="repeat" description="Kelch 2">
    <location>
        <begin position="124"/>
        <end position="179"/>
    </location>
</feature>
<feature type="repeat" description="Kelch 3">
    <location>
        <begin position="181"/>
        <end position="226"/>
    </location>
</feature>
<feature type="repeat" description="Kelch 4">
    <location>
        <begin position="259"/>
        <end position="308"/>
    </location>
</feature>
<feature type="repeat" description="Kelch 5">
    <location>
        <begin position="310"/>
        <end position="360"/>
    </location>
</feature>
<feature type="region of interest" description="Disordered" evidence="1">
    <location>
        <begin position="507"/>
        <end position="530"/>
    </location>
</feature>
<feature type="compositionally biased region" description="Low complexity" evidence="1">
    <location>
        <begin position="515"/>
        <end position="530"/>
    </location>
</feature>
<feature type="modified residue" description="Phosphoserine" evidence="4">
    <location>
        <position position="430"/>
    </location>
</feature>
<feature type="modified residue" description="Phosphoserine" evidence="4">
    <location>
        <position position="437"/>
    </location>
</feature>
<feature type="modified residue" description="Phosphoserine" evidence="4">
    <location>
        <position position="460"/>
    </location>
</feature>
<feature type="modified residue" description="Phosphoserine" evidence="4">
    <location>
        <position position="523"/>
    </location>
</feature>
<feature type="modified residue" description="Phosphoserine" evidence="4">
    <location>
        <position position="980"/>
    </location>
</feature>
<feature type="modified residue" description="Phosphoserine" evidence="4">
    <location>
        <position position="982"/>
    </location>
</feature>
<feature type="modified residue" description="Phosphoserine" evidence="4">
    <location>
        <position position="983"/>
    </location>
</feature>
<feature type="modified residue" description="Phosphoserine" evidence="4">
    <location>
        <position position="984"/>
    </location>
</feature>
<feature type="modified residue" description="Phosphoserine" evidence="4">
    <location>
        <position position="1078"/>
    </location>
</feature>
<feature type="modified residue" description="Phosphoserine" evidence="4">
    <location>
        <position position="1080"/>
    </location>
</feature>
<name>TEA3_SCHPO</name>
<dbReference type="EMBL" id="CU329670">
    <property type="protein sequence ID" value="CAB11288.1"/>
    <property type="molecule type" value="Genomic_DNA"/>
</dbReference>
<dbReference type="PIR" id="T39052">
    <property type="entry name" value="T39052"/>
</dbReference>
<dbReference type="RefSeq" id="NP_594099.1">
    <property type="nucleotide sequence ID" value="NM_001019523.2"/>
</dbReference>
<dbReference type="SMR" id="O14248"/>
<dbReference type="BioGRID" id="279073">
    <property type="interactions" value="51"/>
</dbReference>
<dbReference type="FunCoup" id="O14248">
    <property type="interactions" value="2"/>
</dbReference>
<dbReference type="IntAct" id="O14248">
    <property type="interactions" value="3"/>
</dbReference>
<dbReference type="STRING" id="284812.O14248"/>
<dbReference type="iPTMnet" id="O14248"/>
<dbReference type="PaxDb" id="4896-SPAC6G10.02c.1"/>
<dbReference type="EnsemblFungi" id="SPAC6G10.02c.1">
    <property type="protein sequence ID" value="SPAC6G10.02c.1:pep"/>
    <property type="gene ID" value="SPAC6G10.02c"/>
</dbReference>
<dbReference type="GeneID" id="2542619"/>
<dbReference type="KEGG" id="spo:2542619"/>
<dbReference type="PomBase" id="SPAC6G10.02c">
    <property type="gene designation" value="tea3"/>
</dbReference>
<dbReference type="VEuPathDB" id="FungiDB:SPAC6G10.02c"/>
<dbReference type="eggNOG" id="KOG0379">
    <property type="taxonomic scope" value="Eukaryota"/>
</dbReference>
<dbReference type="HOGENOM" id="CLU_287452_0_0_1"/>
<dbReference type="InParanoid" id="O14248"/>
<dbReference type="OMA" id="CSDESFQ"/>
<dbReference type="PhylomeDB" id="O14248"/>
<dbReference type="PRO" id="PR:O14248"/>
<dbReference type="Proteomes" id="UP000002485">
    <property type="component" value="Chromosome I"/>
</dbReference>
<dbReference type="GO" id="GO:0051285">
    <property type="term" value="C:cell cortex of cell tip"/>
    <property type="evidence" value="ECO:0000314"/>
    <property type="project" value="PomBase"/>
</dbReference>
<dbReference type="GO" id="GO:0032153">
    <property type="term" value="C:cell division site"/>
    <property type="evidence" value="ECO:0000314"/>
    <property type="project" value="PomBase"/>
</dbReference>
<dbReference type="GO" id="GO:0005737">
    <property type="term" value="C:cytoplasm"/>
    <property type="evidence" value="ECO:0007005"/>
    <property type="project" value="PomBase"/>
</dbReference>
<dbReference type="GO" id="GO:0000935">
    <property type="term" value="C:division septum"/>
    <property type="evidence" value="ECO:0000269"/>
    <property type="project" value="PomBase"/>
</dbReference>
<dbReference type="GO" id="GO:0051523">
    <property type="term" value="P:cell growth mode switching, monopolar to bipolar"/>
    <property type="evidence" value="ECO:0000315"/>
    <property type="project" value="PomBase"/>
</dbReference>
<dbReference type="GO" id="GO:0061245">
    <property type="term" value="P:establishment or maintenance of bipolar cell polarity"/>
    <property type="evidence" value="ECO:0000315"/>
    <property type="project" value="PomBase"/>
</dbReference>
<dbReference type="Gene3D" id="2.120.10.80">
    <property type="entry name" value="Kelch-type beta propeller"/>
    <property type="match status" value="2"/>
</dbReference>
<dbReference type="InterPro" id="IPR011043">
    <property type="entry name" value="Gal_Oxase/kelch_b-propeller"/>
</dbReference>
<dbReference type="InterPro" id="IPR015915">
    <property type="entry name" value="Kelch-typ_b-propeller"/>
</dbReference>
<dbReference type="InterPro" id="IPR006652">
    <property type="entry name" value="Kelch_1"/>
</dbReference>
<dbReference type="InterPro" id="IPR052124">
    <property type="entry name" value="Rab9_kelch_effector"/>
</dbReference>
<dbReference type="PANTHER" id="PTHR46647">
    <property type="entry name" value="RAB9 EFFECTOR PROTEIN WITH KELCH MOTIFS"/>
    <property type="match status" value="1"/>
</dbReference>
<dbReference type="PANTHER" id="PTHR46647:SF1">
    <property type="entry name" value="RAB9 EFFECTOR PROTEIN WITH KELCH MOTIFS"/>
    <property type="match status" value="1"/>
</dbReference>
<dbReference type="Pfam" id="PF24681">
    <property type="entry name" value="Kelch_KLHDC2_KLHL20_DRC7"/>
    <property type="match status" value="2"/>
</dbReference>
<dbReference type="SMART" id="SM00612">
    <property type="entry name" value="Kelch"/>
    <property type="match status" value="3"/>
</dbReference>
<dbReference type="SUPFAM" id="SSF50965">
    <property type="entry name" value="Galactose oxidase, central domain"/>
    <property type="match status" value="1"/>
</dbReference>
<evidence type="ECO:0000256" key="1">
    <source>
        <dbReference type="SAM" id="MobiDB-lite"/>
    </source>
</evidence>
<evidence type="ECO:0000269" key="2">
    <source>
    </source>
</evidence>
<evidence type="ECO:0000269" key="3">
    <source>
    </source>
</evidence>
<evidence type="ECO:0000269" key="4">
    <source>
    </source>
</evidence>
<keyword id="KW-0880">Kelch repeat</keyword>
<keyword id="KW-0597">Phosphoprotein</keyword>
<keyword id="KW-1185">Reference proteome</keyword>
<keyword id="KW-0677">Repeat</keyword>
<proteinExistence type="evidence at protein level"/>
<accession>O14248</accession>
<organism>
    <name type="scientific">Schizosaccharomyces pombe (strain 972 / ATCC 24843)</name>
    <name type="common">Fission yeast</name>
    <dbReference type="NCBI Taxonomy" id="284812"/>
    <lineage>
        <taxon>Eukaryota</taxon>
        <taxon>Fungi</taxon>
        <taxon>Dikarya</taxon>
        <taxon>Ascomycota</taxon>
        <taxon>Taphrinomycotina</taxon>
        <taxon>Schizosaccharomycetes</taxon>
        <taxon>Schizosaccharomycetales</taxon>
        <taxon>Schizosaccharomycetaceae</taxon>
        <taxon>Schizosaccharomyces</taxon>
    </lineage>
</organism>